<feature type="transit peptide" description="Chloroplast" evidence="2 4">
    <location>
        <begin position="1"/>
        <end position="51"/>
    </location>
</feature>
<feature type="chain" id="PRO_5000181605" description="Sulfite reductase [ferredoxin], chloroplastic">
    <location>
        <begin position="52"/>
        <end position="685"/>
    </location>
</feature>
<feature type="binding site" evidence="1">
    <location>
        <position position="495"/>
    </location>
    <ligand>
        <name>[4Fe-4S] cluster</name>
        <dbReference type="ChEBI" id="CHEBI:49883"/>
    </ligand>
</feature>
<feature type="binding site" evidence="1">
    <location>
        <position position="501"/>
    </location>
    <ligand>
        <name>[4Fe-4S] cluster</name>
        <dbReference type="ChEBI" id="CHEBI:49883"/>
    </ligand>
</feature>
<feature type="binding site" evidence="1">
    <location>
        <position position="541"/>
    </location>
    <ligand>
        <name>[4Fe-4S] cluster</name>
        <dbReference type="ChEBI" id="CHEBI:49883"/>
    </ligand>
</feature>
<feature type="binding site" evidence="1">
    <location>
        <position position="545"/>
    </location>
    <ligand>
        <name>[4Fe-4S] cluster</name>
        <dbReference type="ChEBI" id="CHEBI:49883"/>
    </ligand>
</feature>
<feature type="binding site" description="axial binding residue" evidence="1">
    <location>
        <position position="545"/>
    </location>
    <ligand>
        <name>siroheme</name>
        <dbReference type="ChEBI" id="CHEBI:60052"/>
    </ligand>
    <ligandPart>
        <name>Fe</name>
        <dbReference type="ChEBI" id="CHEBI:18248"/>
    </ligandPart>
</feature>
<feature type="sequence conflict" description="In Ref. 2; BAC81658." evidence="5" ref="2">
    <original>P</original>
    <variation>L</variation>
    <location>
        <position position="586"/>
    </location>
</feature>
<name>SIR_PEA</name>
<protein>
    <recommendedName>
        <fullName>Sulfite reductase [ferredoxin], chloroplastic</fullName>
        <shortName>PsSiR</shortName>
        <ecNumber evidence="2">1.8.7.1</ecNumber>
    </recommendedName>
</protein>
<dbReference type="EC" id="1.8.7.1" evidence="2"/>
<dbReference type="EMBL" id="AB168112">
    <property type="protein sequence ID" value="BAD12837.2"/>
    <property type="molecule type" value="mRNA"/>
</dbReference>
<dbReference type="EMBL" id="AB087846">
    <property type="protein sequence ID" value="BAC81658.1"/>
    <property type="molecule type" value="mRNA"/>
</dbReference>
<dbReference type="SMR" id="Q75NZ0"/>
<dbReference type="MoonProt" id="Q75NZ0"/>
<dbReference type="BRENDA" id="1.8.7.1">
    <property type="organism ID" value="4872"/>
</dbReference>
<dbReference type="GO" id="GO:0042644">
    <property type="term" value="C:chloroplast nucleoid"/>
    <property type="evidence" value="ECO:0000314"/>
    <property type="project" value="UniProtKB"/>
</dbReference>
<dbReference type="GO" id="GO:0009570">
    <property type="term" value="C:chloroplast stroma"/>
    <property type="evidence" value="ECO:0000314"/>
    <property type="project" value="UniProtKB"/>
</dbReference>
<dbReference type="GO" id="GO:0009337">
    <property type="term" value="C:sulfite reductase complex (NADPH)"/>
    <property type="evidence" value="ECO:0007669"/>
    <property type="project" value="TreeGrafter"/>
</dbReference>
<dbReference type="GO" id="GO:0051539">
    <property type="term" value="F:4 iron, 4 sulfur cluster binding"/>
    <property type="evidence" value="ECO:0007669"/>
    <property type="project" value="UniProtKB-KW"/>
</dbReference>
<dbReference type="GO" id="GO:0003677">
    <property type="term" value="F:DNA binding"/>
    <property type="evidence" value="ECO:0000314"/>
    <property type="project" value="UniProtKB"/>
</dbReference>
<dbReference type="GO" id="GO:0020037">
    <property type="term" value="F:heme binding"/>
    <property type="evidence" value="ECO:0007669"/>
    <property type="project" value="InterPro"/>
</dbReference>
<dbReference type="GO" id="GO:0046872">
    <property type="term" value="F:metal ion binding"/>
    <property type="evidence" value="ECO:0007669"/>
    <property type="project" value="UniProtKB-KW"/>
</dbReference>
<dbReference type="GO" id="GO:0050311">
    <property type="term" value="F:sulfite reductase (ferredoxin) activity"/>
    <property type="evidence" value="ECO:0000250"/>
    <property type="project" value="UniProtKB"/>
</dbReference>
<dbReference type="GO" id="GO:0016002">
    <property type="term" value="F:sulfite reductase activity"/>
    <property type="evidence" value="ECO:0007669"/>
    <property type="project" value="TreeGrafter"/>
</dbReference>
<dbReference type="GO" id="GO:0045892">
    <property type="term" value="P:negative regulation of DNA-templated transcription"/>
    <property type="evidence" value="ECO:0000314"/>
    <property type="project" value="UniProtKB"/>
</dbReference>
<dbReference type="GO" id="GO:0000103">
    <property type="term" value="P:sulfate assimilation"/>
    <property type="evidence" value="ECO:0007669"/>
    <property type="project" value="TreeGrafter"/>
</dbReference>
<dbReference type="GO" id="GO:0019418">
    <property type="term" value="P:sulfide oxidation"/>
    <property type="evidence" value="ECO:0000314"/>
    <property type="project" value="UniProtKB"/>
</dbReference>
<dbReference type="FunFam" id="3.30.413.10:FF:000008">
    <property type="entry name" value="Sulfite reductase [ferredoxin], chloroplastic"/>
    <property type="match status" value="1"/>
</dbReference>
<dbReference type="FunFam" id="3.30.413.10:FF:000014">
    <property type="entry name" value="Sulfite reductase [ferredoxin], chloroplastic"/>
    <property type="match status" value="1"/>
</dbReference>
<dbReference type="FunFam" id="3.90.480.10:FF:000001">
    <property type="entry name" value="Sulfite reductase [ferredoxin], chloroplastic"/>
    <property type="match status" value="1"/>
</dbReference>
<dbReference type="Gene3D" id="3.30.413.10">
    <property type="entry name" value="Sulfite Reductase Hemoprotein, domain 1"/>
    <property type="match status" value="2"/>
</dbReference>
<dbReference type="Gene3D" id="3.90.480.10">
    <property type="entry name" value="Sulfite Reductase Hemoprotein,Domain 2"/>
    <property type="match status" value="2"/>
</dbReference>
<dbReference type="InterPro" id="IPR005117">
    <property type="entry name" value="NiRdtase/SiRdtase_haem-b_fer"/>
</dbReference>
<dbReference type="InterPro" id="IPR036136">
    <property type="entry name" value="Nit/Sulf_reduc_fer-like_dom_sf"/>
</dbReference>
<dbReference type="InterPro" id="IPR006067">
    <property type="entry name" value="NO2/SO3_Rdtase_4Fe4S_dom"/>
</dbReference>
<dbReference type="InterPro" id="IPR045169">
    <property type="entry name" value="NO2/SO3_Rdtase_4Fe4S_prot"/>
</dbReference>
<dbReference type="InterPro" id="IPR045854">
    <property type="entry name" value="NO2/SO3_Rdtase_4Fe4S_sf"/>
</dbReference>
<dbReference type="InterPro" id="IPR006066">
    <property type="entry name" value="NO2/SO3_Rdtase_FeS/sirohaem_BS"/>
</dbReference>
<dbReference type="InterPro" id="IPR011787">
    <property type="entry name" value="SiR_ferredoxin-dep"/>
</dbReference>
<dbReference type="NCBIfam" id="NF010029">
    <property type="entry name" value="PRK13504.1"/>
    <property type="match status" value="1"/>
</dbReference>
<dbReference type="NCBIfam" id="TIGR02042">
    <property type="entry name" value="sir"/>
    <property type="match status" value="1"/>
</dbReference>
<dbReference type="PANTHER" id="PTHR11493:SF47">
    <property type="entry name" value="SULFITE REDUCTASE [NADPH] SUBUNIT BETA"/>
    <property type="match status" value="1"/>
</dbReference>
<dbReference type="PANTHER" id="PTHR11493">
    <property type="entry name" value="SULFITE REDUCTASE [NADPH] SUBUNIT BETA-RELATED"/>
    <property type="match status" value="1"/>
</dbReference>
<dbReference type="Pfam" id="PF01077">
    <property type="entry name" value="NIR_SIR"/>
    <property type="match status" value="2"/>
</dbReference>
<dbReference type="Pfam" id="PF03460">
    <property type="entry name" value="NIR_SIR_ferr"/>
    <property type="match status" value="2"/>
</dbReference>
<dbReference type="PRINTS" id="PR00397">
    <property type="entry name" value="SIROHAEM"/>
</dbReference>
<dbReference type="SUPFAM" id="SSF56014">
    <property type="entry name" value="Nitrite and sulphite reductase 4Fe-4S domain-like"/>
    <property type="match status" value="2"/>
</dbReference>
<dbReference type="SUPFAM" id="SSF55124">
    <property type="entry name" value="Nitrite/Sulfite reductase N-terminal domain-like"/>
    <property type="match status" value="2"/>
</dbReference>
<dbReference type="PROSITE" id="PS00365">
    <property type="entry name" value="NIR_SIR"/>
    <property type="match status" value="1"/>
</dbReference>
<keyword id="KW-0004">4Fe-4S</keyword>
<keyword id="KW-0150">Chloroplast</keyword>
<keyword id="KW-0903">Direct protein sequencing</keyword>
<keyword id="KW-0238">DNA-binding</keyword>
<keyword id="KW-0349">Heme</keyword>
<keyword id="KW-0408">Iron</keyword>
<keyword id="KW-0411">Iron-sulfur</keyword>
<keyword id="KW-0479">Metal-binding</keyword>
<keyword id="KW-0560">Oxidoreductase</keyword>
<keyword id="KW-0934">Plastid</keyword>
<keyword id="KW-0883">Thioether bond</keyword>
<keyword id="KW-0804">Transcription</keyword>
<keyword id="KW-0805">Transcription regulation</keyword>
<keyword id="KW-0809">Transit peptide</keyword>
<sequence length="685" mass="76900">MTTSFAAAALRDPKLQIPNYHGLRSSSAASSLSRNALSVPSSTRSSSLIRAVSTPAKSETATEKKRSKVEIFKEQSNFIRYPLNEDMLTDAPNLSEAATQLIKFHGSYQQYNRDERGSRTYSFMIRTKNPCGKVSNQLYLTMDDLADQFGIGTLRLTTRQTFQLHGVVKKDLKTVMGSIIRNMGSSLGACGDLNRNVLAPAAPIVSKDYLFAQETSENIAALLTPQSGFYYDVWVDGERFMSAEPPEVIQARNDNSHGTNFTDSPEPIYGTQFLPRKFKIAVTVPTDNSVDILTNDIGVVVVTGDGGEPQGFNLYVGGGMGRTHRMETTFPRLAEPLGYVPKEDILYAVKAIVVTQRENGRRDDRRYSRMKYLIDSWGIDKFRNVVEEYYGKKFEPFRSLPEWEFKSYLGWHQQGDGGLFCGLHVDNGRIAGKMKTALREVIEKYHLNVRLTPNQNLILTDIRAAWKRPITTILSQAGLLLPRYVDPLNITAMACPAFPLCPLAITEAERGIPSILKRIRDMFEKVGLKYNESVVVRITGCPNGCARPYMAELGLVGDGPNSYQIWLGGSSNQTSIARSFMDKVKPQDLEKVLEPLFYHWKQKRQSKESFGDFTVRLGFEKLKEFIEKWEGPAVPPTRHNLKLFTDKDTYEAMDGLAKLQNKNAHQLAMEVVRNYIASNLNGKGE</sequence>
<proteinExistence type="evidence at protein level"/>
<evidence type="ECO:0000250" key="1"/>
<evidence type="ECO:0000269" key="2">
    <source>
    </source>
</evidence>
<evidence type="ECO:0000269" key="3">
    <source>
    </source>
</evidence>
<evidence type="ECO:0000269" key="4">
    <source>
    </source>
</evidence>
<evidence type="ECO:0000305" key="5"/>
<comment type="function">
    <text evidence="2 3 4">Essential protein with sulfite reductase activity required in assimilatory sulfate reduction pathway during both primary and secondary metabolism and thus involved in development and growth.</text>
</comment>
<comment type="function">
    <text evidence="2 3 4">DNA-binding protein that binds to both double-stranded and single-stranded DNA without significant sequence specificity to reversibly repress the transcriptional activity of chloroplast nucleoids by promoting DNA compaction and possibly regulate DNA replication.</text>
</comment>
<comment type="catalytic activity">
    <reaction evidence="2">
        <text>hydrogen sulfide + 6 oxidized [2Fe-2S]-[ferredoxin] + 3 H2O = sulfite + 6 reduced [2Fe-2S]-[ferredoxin] + 7 H(+)</text>
        <dbReference type="Rhea" id="RHEA:23132"/>
        <dbReference type="Rhea" id="RHEA-COMP:10000"/>
        <dbReference type="Rhea" id="RHEA-COMP:10001"/>
        <dbReference type="ChEBI" id="CHEBI:15377"/>
        <dbReference type="ChEBI" id="CHEBI:15378"/>
        <dbReference type="ChEBI" id="CHEBI:17359"/>
        <dbReference type="ChEBI" id="CHEBI:29919"/>
        <dbReference type="ChEBI" id="CHEBI:33737"/>
        <dbReference type="ChEBI" id="CHEBI:33738"/>
        <dbReference type="EC" id="1.8.7.1"/>
    </reaction>
</comment>
<comment type="cofactor">
    <cofactor evidence="1">
        <name>siroheme</name>
        <dbReference type="ChEBI" id="CHEBI:60052"/>
    </cofactor>
    <text evidence="1">Binds 1 siroheme per subunit.</text>
</comment>
<comment type="cofactor">
    <cofactor evidence="1">
        <name>[4Fe-4S] cluster</name>
        <dbReference type="ChEBI" id="CHEBI:49883"/>
    </cofactor>
    <text evidence="1">Binds 1 [4Fe-4S] cluster per subunit.</text>
</comment>
<comment type="biophysicochemical properties">
    <absorption>
        <max evidence="2 4">389 nm</max>
        <text>Exhibits a smaller absorbance peak at 580 nm. This absorption spectrum indicates the presence of a siroheme-containing prosthetic group.</text>
    </absorption>
</comment>
<comment type="subunit">
    <text evidence="1">Monomer. Interacts with ferredoxin (By similarity).</text>
</comment>
<comment type="subcellular location">
    <subcellularLocation>
        <location>Plastid</location>
        <location>Chloroplast stroma</location>
        <location>Chloroplast nucleoid</location>
    </subcellularLocation>
    <subcellularLocation>
        <location>Plastid</location>
        <location>Chloroplast stroma</location>
    </subcellularLocation>
    <subcellularLocation>
        <location>Plastid stroma</location>
    </subcellularLocation>
</comment>
<comment type="tissue specificity">
    <text evidence="4">Expressed in leaves, stems, and roots.</text>
</comment>
<comment type="PTM">
    <text evidence="1">Phosphorylated; this phosphorylation reduces DNA-binding.</text>
</comment>
<comment type="similarity">
    <text evidence="5">Belongs to the nitrite and sulfite reductase 4Fe-4S domain family.</text>
</comment>
<accession>Q75NZ0</accession>
<accession>Q76KV3</accession>
<organism>
    <name type="scientific">Pisum sativum</name>
    <name type="common">Garden pea</name>
    <name type="synonym">Lathyrus oleraceus</name>
    <dbReference type="NCBI Taxonomy" id="3888"/>
    <lineage>
        <taxon>Eukaryota</taxon>
        <taxon>Viridiplantae</taxon>
        <taxon>Streptophyta</taxon>
        <taxon>Embryophyta</taxon>
        <taxon>Tracheophyta</taxon>
        <taxon>Spermatophyta</taxon>
        <taxon>Magnoliopsida</taxon>
        <taxon>eudicotyledons</taxon>
        <taxon>Gunneridae</taxon>
        <taxon>Pentapetalae</taxon>
        <taxon>rosids</taxon>
        <taxon>fabids</taxon>
        <taxon>Fabales</taxon>
        <taxon>Fabaceae</taxon>
        <taxon>Papilionoideae</taxon>
        <taxon>50 kb inversion clade</taxon>
        <taxon>NPAAA clade</taxon>
        <taxon>Hologalegina</taxon>
        <taxon>IRL clade</taxon>
        <taxon>Fabeae</taxon>
        <taxon>Pisum</taxon>
    </lineage>
</organism>
<reference key="1">
    <citation type="journal article" date="2007" name="FEBS J.">
        <title>DNA binding and partial nucleoid localization of the chloroplast stromal enzyme ferredoxin:sulfite reductase.</title>
        <authorList>
            <person name="Sekine K."/>
            <person name="Fujiwara M."/>
            <person name="Nakayama M."/>
            <person name="Takao T."/>
            <person name="Hase T."/>
            <person name="Sato N."/>
        </authorList>
    </citation>
    <scope>NUCLEOTIDE SEQUENCE [MRNA]</scope>
    <scope>FUNCTION</scope>
    <scope>SUBCELLULAR LOCATION</scope>
    <scope>TISSUE SPECIFICITY</scope>
    <scope>PROTEIN SEQUENCE OF N-TERMINUS ANALYSIS</scope>
    <scope>BIOPHYSICOCHEMICAL PROPERTIES</scope>
    <source>
        <strain>cv. Alaska</strain>
    </source>
</reference>
<reference key="2">
    <citation type="journal article" date="2003" name="Plant Biotechnol.">
        <title>Phylogenetic classification of Dof-type transcription factors in Pea (Pisum sativum).</title>
        <authorList>
            <person name="Nakamura N."/>
            <person name="Marutani M."/>
            <person name="Sanematsu S."/>
            <person name="Toyoda K."/>
            <person name="Inagaki Y.-S."/>
            <person name="Shiraishi T."/>
            <person name="Ichinose Y."/>
        </authorList>
    </citation>
    <scope>NUCLEOTIDE SEQUENCE [MRNA] OF 377-685</scope>
    <source>
        <strain>cv. Midoriusui</strain>
        <tissue>Epicotyl</tissue>
    </source>
</reference>
<reference key="3">
    <citation type="journal article" date="2001" name="FEBS Lett.">
        <title>The 70-kDa major DNA-compacting protein of the chloroplast nucleoid is sulfite reductase.</title>
        <authorList>
            <person name="Sato N."/>
            <person name="Nakayama M."/>
            <person name="Hase T."/>
        </authorList>
    </citation>
    <scope>PROTEIN SEQUENCE OF N-TERMINUS</scope>
    <scope>FUNCTION</scope>
    <scope>SUBCELLULAR LOCATION</scope>
    <scope>CATALYTIC ACTIVITY</scope>
    <scope>BIOPHYSICOCHEMICAL PROPERTIES</scope>
</reference>
<reference key="4">
    <citation type="journal article" date="2002" name="J. Biol. Chem.">
        <title>Reversible DNA compaction by sulfite reductase regulates transcriptional activity of chloroplast nucleoids.</title>
        <authorList>
            <person name="Sekine K."/>
            <person name="Hase T."/>
            <person name="Sato N."/>
        </authorList>
    </citation>
    <scope>FUNCTION</scope>
</reference>
<gene>
    <name type="primary">SIR</name>
</gene>